<sequence>MGRTETGDESSARKMRRKVPTSIESLDADILCIIFSFLDLFDLVHCTVVCNSWNAVIKRLKLLQASCRKMHHLGSDSPSSSTSLDRPAEIDVEDFAMKHHKMALLRGRIEIERWEAHSHRVSQCRMKKGLLLTGVGDKVMRLWSLKSYKCMEEYSLPDASSLIDFDFDESKKLEVVSLAWEYFDSVVVVVVEIVGLVGTRISIWRRNGQRSIFPSRAGTFPKGLCMRYIDPEAVVGCEDGTARVFDMYSKTCSQIIRTQGGPITCLSLSDNQLFLSGSSLGRVTVSDPLMDQPVATLKSTITAGGIQTICFNQGTNLAFIGTTGGYVSCWDLRKMDRLWEKRVSPNVVYSIQQLRNDTSVMVAGGIDGVLRMIDQKSGRVLSRVIMDDKFSTTSTRNNQVVIEKRRGKRVSQDMEIDKIERKVRPQISCIAMGMKKMVTAHNGKCISVWKFNLS</sequence>
<keyword id="KW-0025">Alternative splicing</keyword>
<keyword id="KW-1185">Reference proteome</keyword>
<keyword id="KW-0677">Repeat</keyword>
<keyword id="KW-0853">WD repeat</keyword>
<protein>
    <recommendedName>
        <fullName>F-box/WD-40 repeat-containing protein At3g52030</fullName>
    </recommendedName>
</protein>
<feature type="chain" id="PRO_0000281990" description="F-box/WD-40 repeat-containing protein At3g52030">
    <location>
        <begin position="1"/>
        <end position="454"/>
    </location>
</feature>
<feature type="domain" description="F-box" evidence="1">
    <location>
        <begin position="20"/>
        <end position="66"/>
    </location>
</feature>
<feature type="repeat" description="WD 1">
    <location>
        <begin position="85"/>
        <end position="116"/>
    </location>
</feature>
<feature type="repeat" description="WD 2">
    <location>
        <begin position="117"/>
        <end position="153"/>
    </location>
</feature>
<feature type="repeat" description="WD 3">
    <location>
        <begin position="170"/>
        <end position="214"/>
    </location>
</feature>
<feature type="repeat" description="WD 4">
    <location>
        <begin position="215"/>
        <end position="255"/>
    </location>
</feature>
<feature type="repeat" description="WD 5">
    <location>
        <begin position="258"/>
        <end position="296"/>
    </location>
</feature>
<feature type="repeat" description="WD 6">
    <location>
        <begin position="301"/>
        <end position="340"/>
    </location>
</feature>
<feature type="repeat" description="WD 7">
    <location>
        <begin position="343"/>
        <end position="383"/>
    </location>
</feature>
<feature type="repeat" description="WD 8">
    <location>
        <begin position="422"/>
        <end position="454"/>
    </location>
</feature>
<gene>
    <name type="ordered locus">At3g52030</name>
    <name type="ORF">F4F15.140</name>
</gene>
<comment type="alternative products">
    <event type="alternative splicing"/>
    <isoform>
        <id>Q9SV01-1</id>
        <name>1</name>
        <sequence type="displayed"/>
    </isoform>
    <text>A number of isoforms are produced. According to EST sequences.</text>
</comment>
<comment type="sequence caution" evidence="2">
    <conflict type="erroneous gene model prediction">
        <sequence resource="EMBL-CDS" id="CAB41323"/>
    </conflict>
</comment>
<dbReference type="EMBL" id="AL049711">
    <property type="protein sequence ID" value="CAB41323.1"/>
    <property type="status" value="ALT_SEQ"/>
    <property type="molecule type" value="Genomic_DNA"/>
</dbReference>
<dbReference type="EMBL" id="CP002686">
    <property type="protein sequence ID" value="AEE78876.1"/>
    <property type="molecule type" value="Genomic_DNA"/>
</dbReference>
<dbReference type="PIR" id="T49082">
    <property type="entry name" value="T49082"/>
</dbReference>
<dbReference type="RefSeq" id="NP_190771.2">
    <molecule id="Q9SV01-1"/>
    <property type="nucleotide sequence ID" value="NM_115062.2"/>
</dbReference>
<dbReference type="SMR" id="Q9SV01"/>
<dbReference type="BioGRID" id="9684">
    <property type="interactions" value="5"/>
</dbReference>
<dbReference type="FunCoup" id="Q9SV01">
    <property type="interactions" value="1763"/>
</dbReference>
<dbReference type="STRING" id="3702.Q9SV01"/>
<dbReference type="iPTMnet" id="Q9SV01"/>
<dbReference type="PaxDb" id="3702-AT3G52030.1"/>
<dbReference type="ProteomicsDB" id="230836">
    <molecule id="Q9SV01-1"/>
</dbReference>
<dbReference type="EnsemblPlants" id="AT3G52030.1">
    <molecule id="Q9SV01-1"/>
    <property type="protein sequence ID" value="AT3G52030.1"/>
    <property type="gene ID" value="AT3G52030"/>
</dbReference>
<dbReference type="GeneID" id="824366"/>
<dbReference type="Gramene" id="AT3G52030.1">
    <molecule id="Q9SV01-1"/>
    <property type="protein sequence ID" value="AT3G52030.1"/>
    <property type="gene ID" value="AT3G52030"/>
</dbReference>
<dbReference type="KEGG" id="ath:AT3G52030"/>
<dbReference type="Araport" id="AT3G52030"/>
<dbReference type="TAIR" id="AT3G52030"/>
<dbReference type="eggNOG" id="ENOG502QWFJ">
    <property type="taxonomic scope" value="Eukaryota"/>
</dbReference>
<dbReference type="InParanoid" id="Q9SV01"/>
<dbReference type="OrthoDB" id="538223at2759"/>
<dbReference type="PhylomeDB" id="Q9SV01"/>
<dbReference type="PRO" id="PR:Q9SV01"/>
<dbReference type="Proteomes" id="UP000006548">
    <property type="component" value="Chromosome 3"/>
</dbReference>
<dbReference type="ExpressionAtlas" id="Q9SV01">
    <property type="expression patterns" value="baseline and differential"/>
</dbReference>
<dbReference type="CDD" id="cd22109">
    <property type="entry name" value="F-box_FBXO41"/>
    <property type="match status" value="1"/>
</dbReference>
<dbReference type="Gene3D" id="1.20.1280.50">
    <property type="match status" value="1"/>
</dbReference>
<dbReference type="Gene3D" id="2.130.10.10">
    <property type="entry name" value="YVTN repeat-like/Quinoprotein amine dehydrogenase"/>
    <property type="match status" value="1"/>
</dbReference>
<dbReference type="InterPro" id="IPR036047">
    <property type="entry name" value="F-box-like_dom_sf"/>
</dbReference>
<dbReference type="InterPro" id="IPR001810">
    <property type="entry name" value="F-box_dom"/>
</dbReference>
<dbReference type="InterPro" id="IPR042627">
    <property type="entry name" value="FBXW2"/>
</dbReference>
<dbReference type="InterPro" id="IPR015943">
    <property type="entry name" value="WD40/YVTN_repeat-like_dom_sf"/>
</dbReference>
<dbReference type="InterPro" id="IPR036322">
    <property type="entry name" value="WD40_repeat_dom_sf"/>
</dbReference>
<dbReference type="InterPro" id="IPR001680">
    <property type="entry name" value="WD40_rpt"/>
</dbReference>
<dbReference type="PANTHER" id="PTHR44436">
    <property type="entry name" value="F-BOX/WD REPEAT-CONTAINING PROTEIN 2"/>
    <property type="match status" value="1"/>
</dbReference>
<dbReference type="PANTHER" id="PTHR44436:SF1">
    <property type="entry name" value="F-BOX_WD REPEAT-CONTAINING PROTEIN 2"/>
    <property type="match status" value="1"/>
</dbReference>
<dbReference type="Pfam" id="PF00646">
    <property type="entry name" value="F-box"/>
    <property type="match status" value="1"/>
</dbReference>
<dbReference type="SMART" id="SM00256">
    <property type="entry name" value="FBOX"/>
    <property type="match status" value="1"/>
</dbReference>
<dbReference type="SMART" id="SM00320">
    <property type="entry name" value="WD40"/>
    <property type="match status" value="5"/>
</dbReference>
<dbReference type="SUPFAM" id="SSF81383">
    <property type="entry name" value="F-box domain"/>
    <property type="match status" value="1"/>
</dbReference>
<dbReference type="SUPFAM" id="SSF50978">
    <property type="entry name" value="WD40 repeat-like"/>
    <property type="match status" value="1"/>
</dbReference>
<dbReference type="PROSITE" id="PS50181">
    <property type="entry name" value="FBOX"/>
    <property type="match status" value="1"/>
</dbReference>
<accession>Q9SV01</accession>
<organism>
    <name type="scientific">Arabidopsis thaliana</name>
    <name type="common">Mouse-ear cress</name>
    <dbReference type="NCBI Taxonomy" id="3702"/>
    <lineage>
        <taxon>Eukaryota</taxon>
        <taxon>Viridiplantae</taxon>
        <taxon>Streptophyta</taxon>
        <taxon>Embryophyta</taxon>
        <taxon>Tracheophyta</taxon>
        <taxon>Spermatophyta</taxon>
        <taxon>Magnoliopsida</taxon>
        <taxon>eudicotyledons</taxon>
        <taxon>Gunneridae</taxon>
        <taxon>Pentapetalae</taxon>
        <taxon>rosids</taxon>
        <taxon>malvids</taxon>
        <taxon>Brassicales</taxon>
        <taxon>Brassicaceae</taxon>
        <taxon>Camelineae</taxon>
        <taxon>Arabidopsis</taxon>
    </lineage>
</organism>
<name>FBW4_ARATH</name>
<reference key="1">
    <citation type="journal article" date="2000" name="Nature">
        <title>Sequence and analysis of chromosome 3 of the plant Arabidopsis thaliana.</title>
        <authorList>
            <person name="Salanoubat M."/>
            <person name="Lemcke K."/>
            <person name="Rieger M."/>
            <person name="Ansorge W."/>
            <person name="Unseld M."/>
            <person name="Fartmann B."/>
            <person name="Valle G."/>
            <person name="Bloecker H."/>
            <person name="Perez-Alonso M."/>
            <person name="Obermaier B."/>
            <person name="Delseny M."/>
            <person name="Boutry M."/>
            <person name="Grivell L.A."/>
            <person name="Mache R."/>
            <person name="Puigdomenech P."/>
            <person name="De Simone V."/>
            <person name="Choisne N."/>
            <person name="Artiguenave F."/>
            <person name="Robert C."/>
            <person name="Brottier P."/>
            <person name="Wincker P."/>
            <person name="Cattolico L."/>
            <person name="Weissenbach J."/>
            <person name="Saurin W."/>
            <person name="Quetier F."/>
            <person name="Schaefer M."/>
            <person name="Mueller-Auer S."/>
            <person name="Gabel C."/>
            <person name="Fuchs M."/>
            <person name="Benes V."/>
            <person name="Wurmbach E."/>
            <person name="Drzonek H."/>
            <person name="Erfle H."/>
            <person name="Jordan N."/>
            <person name="Bangert S."/>
            <person name="Wiedelmann R."/>
            <person name="Kranz H."/>
            <person name="Voss H."/>
            <person name="Holland R."/>
            <person name="Brandt P."/>
            <person name="Nyakatura G."/>
            <person name="Vezzi A."/>
            <person name="D'Angelo M."/>
            <person name="Pallavicini A."/>
            <person name="Toppo S."/>
            <person name="Simionati B."/>
            <person name="Conrad A."/>
            <person name="Hornischer K."/>
            <person name="Kauer G."/>
            <person name="Loehnert T.-H."/>
            <person name="Nordsiek G."/>
            <person name="Reichelt J."/>
            <person name="Scharfe M."/>
            <person name="Schoen O."/>
            <person name="Bargues M."/>
            <person name="Terol J."/>
            <person name="Climent J."/>
            <person name="Navarro P."/>
            <person name="Collado C."/>
            <person name="Perez-Perez A."/>
            <person name="Ottenwaelder B."/>
            <person name="Duchemin D."/>
            <person name="Cooke R."/>
            <person name="Laudie M."/>
            <person name="Berger-Llauro C."/>
            <person name="Purnelle B."/>
            <person name="Masuy D."/>
            <person name="de Haan M."/>
            <person name="Maarse A.C."/>
            <person name="Alcaraz J.-P."/>
            <person name="Cottet A."/>
            <person name="Casacuberta E."/>
            <person name="Monfort A."/>
            <person name="Argiriou A."/>
            <person name="Flores M."/>
            <person name="Liguori R."/>
            <person name="Vitale D."/>
            <person name="Mannhaupt G."/>
            <person name="Haase D."/>
            <person name="Schoof H."/>
            <person name="Rudd S."/>
            <person name="Zaccaria P."/>
            <person name="Mewes H.-W."/>
            <person name="Mayer K.F.X."/>
            <person name="Kaul S."/>
            <person name="Town C.D."/>
            <person name="Koo H.L."/>
            <person name="Tallon L.J."/>
            <person name="Jenkins J."/>
            <person name="Rooney T."/>
            <person name="Rizzo M."/>
            <person name="Walts A."/>
            <person name="Utterback T."/>
            <person name="Fujii C.Y."/>
            <person name="Shea T.P."/>
            <person name="Creasy T.H."/>
            <person name="Haas B."/>
            <person name="Maiti R."/>
            <person name="Wu D."/>
            <person name="Peterson J."/>
            <person name="Van Aken S."/>
            <person name="Pai G."/>
            <person name="Militscher J."/>
            <person name="Sellers P."/>
            <person name="Gill J.E."/>
            <person name="Feldblyum T.V."/>
            <person name="Preuss D."/>
            <person name="Lin X."/>
            <person name="Nierman W.C."/>
            <person name="Salzberg S.L."/>
            <person name="White O."/>
            <person name="Venter J.C."/>
            <person name="Fraser C.M."/>
            <person name="Kaneko T."/>
            <person name="Nakamura Y."/>
            <person name="Sato S."/>
            <person name="Kato T."/>
            <person name="Asamizu E."/>
            <person name="Sasamoto S."/>
            <person name="Kimura T."/>
            <person name="Idesawa K."/>
            <person name="Kawashima K."/>
            <person name="Kishida Y."/>
            <person name="Kiyokawa C."/>
            <person name="Kohara M."/>
            <person name="Matsumoto M."/>
            <person name="Matsuno A."/>
            <person name="Muraki A."/>
            <person name="Nakayama S."/>
            <person name="Nakazaki N."/>
            <person name="Shinpo S."/>
            <person name="Takeuchi C."/>
            <person name="Wada T."/>
            <person name="Watanabe A."/>
            <person name="Yamada M."/>
            <person name="Yasuda M."/>
            <person name="Tabata S."/>
        </authorList>
    </citation>
    <scope>NUCLEOTIDE SEQUENCE [LARGE SCALE GENOMIC DNA]</scope>
    <source>
        <strain>cv. Columbia</strain>
    </source>
</reference>
<reference key="2">
    <citation type="journal article" date="2017" name="Plant J.">
        <title>Araport11: a complete reannotation of the Arabidopsis thaliana reference genome.</title>
        <authorList>
            <person name="Cheng C.Y."/>
            <person name="Krishnakumar V."/>
            <person name="Chan A.P."/>
            <person name="Thibaud-Nissen F."/>
            <person name="Schobel S."/>
            <person name="Town C.D."/>
        </authorList>
    </citation>
    <scope>GENOME REANNOTATION</scope>
    <source>
        <strain>cv. Columbia</strain>
    </source>
</reference>
<evidence type="ECO:0000255" key="1">
    <source>
        <dbReference type="PROSITE-ProRule" id="PRU00080"/>
    </source>
</evidence>
<evidence type="ECO:0000305" key="2"/>
<proteinExistence type="predicted"/>